<name>ARL2_BOVIN</name>
<protein>
    <recommendedName>
        <fullName>ADP-ribosylation factor-like protein 2</fullName>
    </recommendedName>
</protein>
<feature type="initiator methionine" description="Removed" evidence="4">
    <location>
        <position position="1"/>
    </location>
</feature>
<feature type="chain" id="PRO_0000245353" description="ADP-ribosylation factor-like protein 2">
    <location>
        <begin position="2"/>
        <end position="184"/>
    </location>
</feature>
<feature type="binding site" evidence="1">
    <location>
        <begin position="23"/>
        <end position="30"/>
    </location>
    <ligand>
        <name>GTP</name>
        <dbReference type="ChEBI" id="CHEBI:37565"/>
    </ligand>
</feature>
<feature type="binding site" evidence="1">
    <location>
        <begin position="66"/>
        <end position="70"/>
    </location>
    <ligand>
        <name>GTP</name>
        <dbReference type="ChEBI" id="CHEBI:37565"/>
    </ligand>
</feature>
<feature type="binding site" evidence="1">
    <location>
        <position position="68"/>
    </location>
    <ligand>
        <name>GTP</name>
        <dbReference type="ChEBI" id="CHEBI:37565"/>
    </ligand>
</feature>
<feature type="binding site" evidence="1">
    <location>
        <begin position="125"/>
        <end position="128"/>
    </location>
    <ligand>
        <name>GTP</name>
        <dbReference type="ChEBI" id="CHEBI:37565"/>
    </ligand>
</feature>
<feature type="modified residue" description="Phosphoserine" evidence="3">
    <location>
        <position position="45"/>
    </location>
</feature>
<feature type="lipid moiety-binding region" description="N-myristoyl glycine" evidence="4">
    <location>
        <position position="2"/>
    </location>
</feature>
<feature type="cross-link" description="Glycyl lysine isopeptide (Lys-Gly) (interchain with G-Cter in ubiquitin)" evidence="2">
    <location>
        <position position="71"/>
    </location>
</feature>
<feature type="mutagenesis site" description="No effect on tubulin degradation or cell detachment. Inhibits TBCD-dependent tubulin degradation. Does not reduce interaction with TBCD." evidence="7">
    <original>T</original>
    <variation>L</variation>
    <location>
        <position position="30"/>
    </location>
</feature>
<feature type="mutagenesis site" description="No effect on tubulin degradation or cell detachment. Does not reduce TBCD-dependent tubulin degradation. Reduces slightly interaction with TBCD." evidence="7">
    <original>Q</original>
    <variation>L</variation>
    <location>
        <position position="70"/>
    </location>
</feature>
<gene>
    <name type="primary">ARL2</name>
</gene>
<dbReference type="EMBL" id="BC111133">
    <property type="protein sequence ID" value="AAI11134.1"/>
    <property type="molecule type" value="mRNA"/>
</dbReference>
<dbReference type="RefSeq" id="NP_001033168.1">
    <property type="nucleotide sequence ID" value="NM_001038079.2"/>
</dbReference>
<dbReference type="SMR" id="Q2TA37"/>
<dbReference type="FunCoup" id="Q2TA37">
    <property type="interactions" value="2598"/>
</dbReference>
<dbReference type="STRING" id="9913.ENSBTAP00000002890"/>
<dbReference type="PaxDb" id="9913-ENSBTAP00000002890"/>
<dbReference type="Ensembl" id="ENSBTAT00000002890.4">
    <property type="protein sequence ID" value="ENSBTAP00000002890.3"/>
    <property type="gene ID" value="ENSBTAG00000002238.5"/>
</dbReference>
<dbReference type="GeneID" id="511349"/>
<dbReference type="KEGG" id="bta:511349"/>
<dbReference type="CTD" id="402"/>
<dbReference type="VEuPathDB" id="HostDB:ENSBTAG00000002238"/>
<dbReference type="VGNC" id="VGNC:97240">
    <property type="gene designation" value="ARL2"/>
</dbReference>
<dbReference type="eggNOG" id="KOG0073">
    <property type="taxonomic scope" value="Eukaryota"/>
</dbReference>
<dbReference type="GeneTree" id="ENSGT00940000157941"/>
<dbReference type="HOGENOM" id="CLU_040729_12_3_1"/>
<dbReference type="InParanoid" id="Q2TA37"/>
<dbReference type="OMA" id="KTHHWQI"/>
<dbReference type="OrthoDB" id="2011769at2759"/>
<dbReference type="TreeFam" id="TF105462"/>
<dbReference type="Reactome" id="R-BTA-83936">
    <property type="pathway name" value="Transport of nucleosides and free purine and pyrimidine bases across the plasma membrane"/>
</dbReference>
<dbReference type="Reactome" id="R-BTA-9648002">
    <property type="pathway name" value="RAS processing"/>
</dbReference>
<dbReference type="Proteomes" id="UP000009136">
    <property type="component" value="Chromosome 29"/>
</dbReference>
<dbReference type="Bgee" id="ENSBTAG00000002238">
    <property type="expression patterns" value="Expressed in laryngeal cartilage and 104 other cell types or tissues"/>
</dbReference>
<dbReference type="GO" id="GO:0005813">
    <property type="term" value="C:centrosome"/>
    <property type="evidence" value="ECO:0000250"/>
    <property type="project" value="UniProtKB"/>
</dbReference>
<dbReference type="GO" id="GO:0036064">
    <property type="term" value="C:ciliary basal body"/>
    <property type="evidence" value="ECO:0007669"/>
    <property type="project" value="Ensembl"/>
</dbReference>
<dbReference type="GO" id="GO:0005737">
    <property type="term" value="C:cytoplasm"/>
    <property type="evidence" value="ECO:0000314"/>
    <property type="project" value="UniProtKB"/>
</dbReference>
<dbReference type="GO" id="GO:0016328">
    <property type="term" value="C:lateral plasma membrane"/>
    <property type="evidence" value="ECO:0000314"/>
    <property type="project" value="UniProtKB"/>
</dbReference>
<dbReference type="GO" id="GO:0015630">
    <property type="term" value="C:microtubule cytoskeleton"/>
    <property type="evidence" value="ECO:0000318"/>
    <property type="project" value="GO_Central"/>
</dbReference>
<dbReference type="GO" id="GO:0005758">
    <property type="term" value="C:mitochondrial intermembrane space"/>
    <property type="evidence" value="ECO:0007669"/>
    <property type="project" value="UniProtKB-SubCell"/>
</dbReference>
<dbReference type="GO" id="GO:0005739">
    <property type="term" value="C:mitochondrion"/>
    <property type="evidence" value="ECO:0000304"/>
    <property type="project" value="AgBase"/>
</dbReference>
<dbReference type="GO" id="GO:0005730">
    <property type="term" value="C:nucleolus"/>
    <property type="evidence" value="ECO:0007669"/>
    <property type="project" value="Ensembl"/>
</dbReference>
<dbReference type="GO" id="GO:0005654">
    <property type="term" value="C:nucleoplasm"/>
    <property type="evidence" value="ECO:0007669"/>
    <property type="project" value="Ensembl"/>
</dbReference>
<dbReference type="GO" id="GO:0005634">
    <property type="term" value="C:nucleus"/>
    <property type="evidence" value="ECO:0000250"/>
    <property type="project" value="UniProtKB"/>
</dbReference>
<dbReference type="GO" id="GO:0019003">
    <property type="term" value="F:GDP binding"/>
    <property type="evidence" value="ECO:0007669"/>
    <property type="project" value="Ensembl"/>
</dbReference>
<dbReference type="GO" id="GO:0005525">
    <property type="term" value="F:GTP binding"/>
    <property type="evidence" value="ECO:0000318"/>
    <property type="project" value="GO_Central"/>
</dbReference>
<dbReference type="GO" id="GO:0003924">
    <property type="term" value="F:GTPase activity"/>
    <property type="evidence" value="ECO:0000250"/>
    <property type="project" value="UniProtKB"/>
</dbReference>
<dbReference type="GO" id="GO:0034333">
    <property type="term" value="P:adherens junction assembly"/>
    <property type="evidence" value="ECO:0000314"/>
    <property type="project" value="UniProtKB"/>
</dbReference>
<dbReference type="GO" id="GO:0070830">
    <property type="term" value="P:bicellular tight junction assembly"/>
    <property type="evidence" value="ECO:0000314"/>
    <property type="project" value="UniProtKB"/>
</dbReference>
<dbReference type="GO" id="GO:0007098">
    <property type="term" value="P:centrosome cycle"/>
    <property type="evidence" value="ECO:0000250"/>
    <property type="project" value="UniProtKB"/>
</dbReference>
<dbReference type="GO" id="GO:0051457">
    <property type="term" value="P:maintenance of protein location in nucleus"/>
    <property type="evidence" value="ECO:0000250"/>
    <property type="project" value="UniProtKB"/>
</dbReference>
<dbReference type="GO" id="GO:0034260">
    <property type="term" value="P:negative regulation of GTPase activity"/>
    <property type="evidence" value="ECO:0000250"/>
    <property type="project" value="UniProtKB"/>
</dbReference>
<dbReference type="GO" id="GO:0010811">
    <property type="term" value="P:positive regulation of cell-substrate adhesion"/>
    <property type="evidence" value="ECO:0000314"/>
    <property type="project" value="UniProtKB"/>
</dbReference>
<dbReference type="GO" id="GO:0031116">
    <property type="term" value="P:positive regulation of microtubule polymerization"/>
    <property type="evidence" value="ECO:0000314"/>
    <property type="project" value="UniProtKB"/>
</dbReference>
<dbReference type="GO" id="GO:0006457">
    <property type="term" value="P:protein folding"/>
    <property type="evidence" value="ECO:0000318"/>
    <property type="project" value="GO_Central"/>
</dbReference>
<dbReference type="GO" id="GO:1903715">
    <property type="term" value="P:regulation of aerobic respiration"/>
    <property type="evidence" value="ECO:0007669"/>
    <property type="project" value="Ensembl"/>
</dbReference>
<dbReference type="GO" id="GO:0006110">
    <property type="term" value="P:regulation of glycolytic process"/>
    <property type="evidence" value="ECO:0007669"/>
    <property type="project" value="Ensembl"/>
</dbReference>
<dbReference type="CDD" id="cd04154">
    <property type="entry name" value="Arl2"/>
    <property type="match status" value="1"/>
</dbReference>
<dbReference type="FunFam" id="3.40.50.300:FF:000393">
    <property type="entry name" value="ADP-ribosylation factor-like 2, arl2"/>
    <property type="match status" value="1"/>
</dbReference>
<dbReference type="Gene3D" id="3.40.50.300">
    <property type="entry name" value="P-loop containing nucleotide triphosphate hydrolases"/>
    <property type="match status" value="1"/>
</dbReference>
<dbReference type="InterPro" id="IPR045873">
    <property type="entry name" value="Arl2"/>
</dbReference>
<dbReference type="InterPro" id="IPR044612">
    <property type="entry name" value="ARL2/3"/>
</dbReference>
<dbReference type="InterPro" id="IPR027417">
    <property type="entry name" value="P-loop_NTPase"/>
</dbReference>
<dbReference type="InterPro" id="IPR005225">
    <property type="entry name" value="Small_GTP-bd"/>
</dbReference>
<dbReference type="InterPro" id="IPR006689">
    <property type="entry name" value="Small_GTPase_ARF/SAR"/>
</dbReference>
<dbReference type="NCBIfam" id="TIGR00231">
    <property type="entry name" value="small_GTP"/>
    <property type="match status" value="1"/>
</dbReference>
<dbReference type="PANTHER" id="PTHR45697">
    <property type="entry name" value="ADP-RIBOSYLATION FACTOR-LIKE PROTEIN 2-RELATED"/>
    <property type="match status" value="1"/>
</dbReference>
<dbReference type="Pfam" id="PF00025">
    <property type="entry name" value="Arf"/>
    <property type="match status" value="1"/>
</dbReference>
<dbReference type="PRINTS" id="PR00328">
    <property type="entry name" value="SAR1GTPBP"/>
</dbReference>
<dbReference type="SMART" id="SM00177">
    <property type="entry name" value="ARF"/>
    <property type="match status" value="1"/>
</dbReference>
<dbReference type="SMART" id="SM00175">
    <property type="entry name" value="RAB"/>
    <property type="match status" value="1"/>
</dbReference>
<dbReference type="SMART" id="SM00178">
    <property type="entry name" value="SAR"/>
    <property type="match status" value="1"/>
</dbReference>
<dbReference type="SUPFAM" id="SSF52540">
    <property type="entry name" value="P-loop containing nucleoside triphosphate hydrolases"/>
    <property type="match status" value="1"/>
</dbReference>
<dbReference type="PROSITE" id="PS51417">
    <property type="entry name" value="ARF"/>
    <property type="match status" value="1"/>
</dbReference>
<sequence>MGLLTILKKMKQKERELRLLMLGLDNAGKTTILKKFNGEDIDTISPTLGFNIKTLEHRGFKLNIWDVGGQKSLRSYWRNYFESTDGLIWVVDSADRQRMQDCQRELQNLLVEERLAGATLLIFANKQDLPGALSSNAIREALELDSIRSHHWCIQGCSAVTGENLLPGIDWLLDDISSRIFMAD</sequence>
<comment type="function">
    <text evidence="7">Small GTP-binding protein which cycles between an inactive GDP-bound and an active GTP-bound form, and the rate of cycling is regulated by guanine nucleotide exchange factors (GEF) and GTPase-activating proteins (GAP). GTP-binding protein that does not act as an allosteric activator of the cholera toxin catalytic subunit. Regulates formation of new microtubules and centrosome integrity. Prevents the TBCD-induced microtubule destruction. Participates in association with TBCD, in the disassembly of the apical junction complexes. Antagonizes the effect of TBCD on epithelial cell detachment and tight and adherens junctions disassembly. Together with ARL2, plays a role in the nuclear translocation, retention and transcriptional activity of STAT3. Component of a regulated secretory pathway involved in Ca(2+)-dependent release of acetylcholine. Required for normal progress through the cell cycle.</text>
</comment>
<comment type="subunit">
    <text evidence="1 5 6 7">Interacts with ELMOD2. Interacts with ARL2BP; the GTP-bound form interacts with ARL2BP. The GDP-bound form interacts preferentially with TBCD. Interacts with UNC119. Found in a complex with ARL2, ARL2BP and SLC25A4. The GTP-bound form interacts with PDE6D (By similarity). Found in a complex with ARL2, ARL2BP and SLC25A6. Found in a complex with at least ARL2, PPP2CB, PPP2R1A, PPP2R2A, PPP2R5E and TBCD.</text>
</comment>
<comment type="subcellular location">
    <subcellularLocation>
        <location evidence="1">Nucleus</location>
    </subcellularLocation>
    <subcellularLocation>
        <location evidence="1">Mitochondrion intermembrane space</location>
    </subcellularLocation>
    <subcellularLocation>
        <location evidence="1">Cytoplasm</location>
        <location evidence="1">Cytoskeleton</location>
        <location evidence="1">Microtubule organizing center</location>
        <location evidence="1">Centrosome</location>
    </subcellularLocation>
    <subcellularLocation>
        <location>Cytoplasm</location>
    </subcellularLocation>
    <subcellularLocation>
        <location>Mitochondrion</location>
    </subcellularLocation>
    <text evidence="1">The complex formed with ARL2BP, ARL2 and SLC25A4 is expressed in mitochondria. Not detected in the Golgi, nucleus and on the mitotic spindle. Centrosome-associated throughout the cell cycle. Not detected to interphase microtubules (By similarity). The complex formed with ARL2BP, ARL2 and SLC25A6 is expressed in mitochondria.</text>
</comment>
<comment type="tissue specificity">
    <text evidence="5 6">Expressed in liver and retina (at protein level).</text>
</comment>
<comment type="PTM">
    <text evidence="1">Not N-myristoylated.</text>
</comment>
<comment type="similarity">
    <text evidence="8">Belongs to the small GTPase superfamily. Arf family.</text>
</comment>
<keyword id="KW-0131">Cell cycle</keyword>
<keyword id="KW-0963">Cytoplasm</keyword>
<keyword id="KW-0206">Cytoskeleton</keyword>
<keyword id="KW-0342">GTP-binding</keyword>
<keyword id="KW-1017">Isopeptide bond</keyword>
<keyword id="KW-0449">Lipoprotein</keyword>
<keyword id="KW-0496">Mitochondrion</keyword>
<keyword id="KW-0519">Myristate</keyword>
<keyword id="KW-0547">Nucleotide-binding</keyword>
<keyword id="KW-0539">Nucleus</keyword>
<keyword id="KW-0597">Phosphoprotein</keyword>
<keyword id="KW-1185">Reference proteome</keyword>
<keyword id="KW-0832">Ubl conjugation</keyword>
<proteinExistence type="evidence at protein level"/>
<accession>Q2TA37</accession>
<reference key="1">
    <citation type="submission" date="2005-12" db="EMBL/GenBank/DDBJ databases">
        <authorList>
            <consortium name="NIH - Mammalian Gene Collection (MGC) project"/>
        </authorList>
    </citation>
    <scope>NUCLEOTIDE SEQUENCE [LARGE SCALE MRNA]</scope>
    <source>
        <strain>Crossbred X Angus</strain>
        <tissue>Liver</tissue>
    </source>
</reference>
<reference key="2">
    <citation type="journal article" date="2002" name="Mol. Biol. Cell">
        <title>ARL2 and BART enter mitochondria and bind the adenine nucleotide transporter.</title>
        <authorList>
            <person name="Sharer J.D."/>
            <person name="Shern J.F."/>
            <person name="Van Valkenburgh H."/>
            <person name="Wallace D.C."/>
            <person name="Kahn R.A."/>
        </authorList>
    </citation>
    <scope>IDENTIFICATION IN A COMPLEX WITH ARL2BP AND SLC25A6</scope>
    <scope>SUBCELLULAR LOCATION</scope>
    <scope>TISSUE SPECIFICITY</scope>
</reference>
<reference key="3">
    <citation type="journal article" date="2003" name="J. Biol. Chem.">
        <title>Cytosolic Arl2 is complexed with cofactor D and protein phosphatase 2A.</title>
        <authorList>
            <person name="Shern J.F."/>
            <person name="Sharer J.D."/>
            <person name="Pallas D.C."/>
            <person name="Bartolini F."/>
            <person name="Cowan N.J."/>
            <person name="Reed M.S."/>
            <person name="Pohl J."/>
            <person name="Kahn R.A."/>
        </authorList>
    </citation>
    <scope>IDENTIFICATION IN A COMPLEX WITH PPP2CB; PPP2R1A; PPP2R2A; PPP2R5E AND TBCD</scope>
    <scope>TISSUE SPECIFICITY</scope>
    <scope>SUBCELLULAR LOCATION</scope>
</reference>
<reference key="4">
    <citation type="journal article" date="2008" name="FASEB J.">
        <title>Beta-tubulin cofactor D and ARL2 take part in apical junctional complex disassembly and abrogate epithelial structure.</title>
        <authorList>
            <person name="Shultz T."/>
            <person name="Shmuel M."/>
            <person name="Hyman T."/>
            <person name="Altschuler Y."/>
        </authorList>
    </citation>
    <scope>FUNCTION</scope>
    <scope>INTERACTION WITH TBCD</scope>
    <scope>MUTAGENESIS OF THR-30 AND GLN-70</scope>
    <scope>SUBCELLULAR LOCATION</scope>
</reference>
<evidence type="ECO:0000250" key="1"/>
<evidence type="ECO:0000250" key="2">
    <source>
        <dbReference type="UniProtKB" id="P36404"/>
    </source>
</evidence>
<evidence type="ECO:0000250" key="3">
    <source>
        <dbReference type="UniProtKB" id="Q9D0J4"/>
    </source>
</evidence>
<evidence type="ECO:0000255" key="4"/>
<evidence type="ECO:0000269" key="5">
    <source>
    </source>
</evidence>
<evidence type="ECO:0000269" key="6">
    <source>
    </source>
</evidence>
<evidence type="ECO:0000269" key="7">
    <source>
    </source>
</evidence>
<evidence type="ECO:0000305" key="8"/>
<organism>
    <name type="scientific">Bos taurus</name>
    <name type="common">Bovine</name>
    <dbReference type="NCBI Taxonomy" id="9913"/>
    <lineage>
        <taxon>Eukaryota</taxon>
        <taxon>Metazoa</taxon>
        <taxon>Chordata</taxon>
        <taxon>Craniata</taxon>
        <taxon>Vertebrata</taxon>
        <taxon>Euteleostomi</taxon>
        <taxon>Mammalia</taxon>
        <taxon>Eutheria</taxon>
        <taxon>Laurasiatheria</taxon>
        <taxon>Artiodactyla</taxon>
        <taxon>Ruminantia</taxon>
        <taxon>Pecora</taxon>
        <taxon>Bovidae</taxon>
        <taxon>Bovinae</taxon>
        <taxon>Bos</taxon>
    </lineage>
</organism>